<reference key="1">
    <citation type="journal article" date="2008" name="Proc. Natl. Acad. Sci. U.S.A.">
        <title>The genome of Clostridium kluyveri, a strict anaerobe with unique metabolic features.</title>
        <authorList>
            <person name="Seedorf H."/>
            <person name="Fricke W.F."/>
            <person name="Veith B."/>
            <person name="Brueggemann H."/>
            <person name="Liesegang H."/>
            <person name="Strittmatter A."/>
            <person name="Miethke M."/>
            <person name="Buckel W."/>
            <person name="Hinderberger J."/>
            <person name="Li F."/>
            <person name="Hagemeier C."/>
            <person name="Thauer R.K."/>
            <person name="Gottschalk G."/>
        </authorList>
    </citation>
    <scope>NUCLEOTIDE SEQUENCE [LARGE SCALE GENOMIC DNA]</scope>
    <source>
        <strain>ATCC 8527 / DSM 555 / NBRC 12016 / NCIMB 10680 / K1</strain>
    </source>
</reference>
<name>SSRP_CLOK5</name>
<accession>A5N2N2</accession>
<evidence type="ECO:0000255" key="1">
    <source>
        <dbReference type="HAMAP-Rule" id="MF_00023"/>
    </source>
</evidence>
<keyword id="KW-0963">Cytoplasm</keyword>
<keyword id="KW-1185">Reference proteome</keyword>
<keyword id="KW-0694">RNA-binding</keyword>
<proteinExistence type="inferred from homology"/>
<comment type="function">
    <text evidence="1">Required for rescue of stalled ribosomes mediated by trans-translation. Binds to transfer-messenger RNA (tmRNA), required for stable association of tmRNA with ribosomes. tmRNA and SmpB together mimic tRNA shape, replacing the anticodon stem-loop with SmpB. tmRNA is encoded by the ssrA gene; the 2 termini fold to resemble tRNA(Ala) and it encodes a 'tag peptide', a short internal open reading frame. During trans-translation Ala-aminoacylated tmRNA acts like a tRNA, entering the A-site of stalled ribosomes, displacing the stalled mRNA. The ribosome then switches to translate the ORF on the tmRNA; the nascent peptide is terminated with the 'tag peptide' encoded by the tmRNA and targeted for degradation. The ribosome is freed to recommence translation, which seems to be the essential function of trans-translation.</text>
</comment>
<comment type="subcellular location">
    <subcellularLocation>
        <location evidence="1">Cytoplasm</location>
    </subcellularLocation>
    <text evidence="1">The tmRNA-SmpB complex associates with stalled 70S ribosomes.</text>
</comment>
<comment type="similarity">
    <text evidence="1">Belongs to the SmpB family.</text>
</comment>
<sequence>MSAKNKSNNKTLAENRKARHDYFIEESMEAGIQLVGTEVKSIRAGKSNLKDSYGEIINGEIFIRNMHISPYEKGNIFNRDPLRDRKLLLHKKEIARLLGYTAQQGYTIVPLSLYLKNGRVKVNLAVAKGKKNYDKRDSMLEKAAKRDIERQMKERFR</sequence>
<organism>
    <name type="scientific">Clostridium kluyveri (strain ATCC 8527 / DSM 555 / NBRC 12016 / NCIMB 10680 / K1)</name>
    <dbReference type="NCBI Taxonomy" id="431943"/>
    <lineage>
        <taxon>Bacteria</taxon>
        <taxon>Bacillati</taxon>
        <taxon>Bacillota</taxon>
        <taxon>Clostridia</taxon>
        <taxon>Eubacteriales</taxon>
        <taxon>Clostridiaceae</taxon>
        <taxon>Clostridium</taxon>
    </lineage>
</organism>
<gene>
    <name evidence="1" type="primary">smpB</name>
    <name type="ordered locus">CKL_3375</name>
</gene>
<protein>
    <recommendedName>
        <fullName evidence="1">SsrA-binding protein</fullName>
    </recommendedName>
    <alternativeName>
        <fullName evidence="1">Small protein B</fullName>
    </alternativeName>
</protein>
<feature type="chain" id="PRO_0000331033" description="SsrA-binding protein">
    <location>
        <begin position="1"/>
        <end position="157"/>
    </location>
</feature>
<dbReference type="EMBL" id="CP000673">
    <property type="protein sequence ID" value="EDK35378.1"/>
    <property type="molecule type" value="Genomic_DNA"/>
</dbReference>
<dbReference type="RefSeq" id="WP_012103708.1">
    <property type="nucleotide sequence ID" value="NC_009706.1"/>
</dbReference>
<dbReference type="SMR" id="A5N2N2"/>
<dbReference type="STRING" id="431943.CKL_3375"/>
<dbReference type="KEGG" id="ckl:CKL_3375"/>
<dbReference type="eggNOG" id="COG0691">
    <property type="taxonomic scope" value="Bacteria"/>
</dbReference>
<dbReference type="HOGENOM" id="CLU_108953_0_0_9"/>
<dbReference type="Proteomes" id="UP000002411">
    <property type="component" value="Chromosome"/>
</dbReference>
<dbReference type="GO" id="GO:0005829">
    <property type="term" value="C:cytosol"/>
    <property type="evidence" value="ECO:0007669"/>
    <property type="project" value="TreeGrafter"/>
</dbReference>
<dbReference type="GO" id="GO:0003723">
    <property type="term" value="F:RNA binding"/>
    <property type="evidence" value="ECO:0007669"/>
    <property type="project" value="UniProtKB-UniRule"/>
</dbReference>
<dbReference type="GO" id="GO:0070929">
    <property type="term" value="P:trans-translation"/>
    <property type="evidence" value="ECO:0007669"/>
    <property type="project" value="UniProtKB-UniRule"/>
</dbReference>
<dbReference type="CDD" id="cd09294">
    <property type="entry name" value="SmpB"/>
    <property type="match status" value="1"/>
</dbReference>
<dbReference type="Gene3D" id="2.40.280.10">
    <property type="match status" value="1"/>
</dbReference>
<dbReference type="HAMAP" id="MF_00023">
    <property type="entry name" value="SmpB"/>
    <property type="match status" value="1"/>
</dbReference>
<dbReference type="InterPro" id="IPR023620">
    <property type="entry name" value="SmpB"/>
</dbReference>
<dbReference type="InterPro" id="IPR000037">
    <property type="entry name" value="SsrA-bd_prot"/>
</dbReference>
<dbReference type="InterPro" id="IPR020081">
    <property type="entry name" value="SsrA-bd_prot_CS"/>
</dbReference>
<dbReference type="NCBIfam" id="NF003843">
    <property type="entry name" value="PRK05422.1"/>
    <property type="match status" value="1"/>
</dbReference>
<dbReference type="NCBIfam" id="TIGR00086">
    <property type="entry name" value="smpB"/>
    <property type="match status" value="1"/>
</dbReference>
<dbReference type="PANTHER" id="PTHR30308:SF2">
    <property type="entry name" value="SSRA-BINDING PROTEIN"/>
    <property type="match status" value="1"/>
</dbReference>
<dbReference type="PANTHER" id="PTHR30308">
    <property type="entry name" value="TMRNA-BINDING COMPONENT OF TRANS-TRANSLATION TAGGING COMPLEX"/>
    <property type="match status" value="1"/>
</dbReference>
<dbReference type="Pfam" id="PF01668">
    <property type="entry name" value="SmpB"/>
    <property type="match status" value="1"/>
</dbReference>
<dbReference type="SUPFAM" id="SSF74982">
    <property type="entry name" value="Small protein B (SmpB)"/>
    <property type="match status" value="1"/>
</dbReference>
<dbReference type="PROSITE" id="PS01317">
    <property type="entry name" value="SSRP"/>
    <property type="match status" value="1"/>
</dbReference>